<dbReference type="EC" id="3.6.1.-" evidence="6"/>
<dbReference type="EMBL" id="AB056152">
    <property type="protein sequence ID" value="BAB60709.1"/>
    <property type="molecule type" value="mRNA"/>
</dbReference>
<dbReference type="EMBL" id="AK026179">
    <property type="protein sequence ID" value="BAB15383.1"/>
    <property type="status" value="ALT_INIT"/>
    <property type="molecule type" value="mRNA"/>
</dbReference>
<dbReference type="EMBL" id="AK315471">
    <property type="protein sequence ID" value="BAG37857.1"/>
    <property type="molecule type" value="mRNA"/>
</dbReference>
<dbReference type="EMBL" id="AB209723">
    <property type="protein sequence ID" value="BAD92960.1"/>
    <property type="molecule type" value="mRNA"/>
</dbReference>
<dbReference type="EMBL" id="AK223593">
    <property type="protein sequence ID" value="BAD97313.1"/>
    <property type="molecule type" value="mRNA"/>
</dbReference>
<dbReference type="EMBL" id="AL139092">
    <property type="status" value="NOT_ANNOTATED_CDS"/>
    <property type="molecule type" value="Genomic_DNA"/>
</dbReference>
<dbReference type="EMBL" id="CH471087">
    <property type="protein sequence ID" value="EAW55087.1"/>
    <property type="molecule type" value="Genomic_DNA"/>
</dbReference>
<dbReference type="EMBL" id="BC018923">
    <property type="protein sequence ID" value="AAH18923.1"/>
    <property type="molecule type" value="mRNA"/>
</dbReference>
<dbReference type="EMBL" id="AF218313">
    <property type="protein sequence ID" value="AAF80563.1"/>
    <property type="status" value="ALT_INIT"/>
    <property type="molecule type" value="mRNA"/>
</dbReference>
<dbReference type="CCDS" id="CCDS4475.1">
    <molecule id="Q96S55-1"/>
</dbReference>
<dbReference type="CCDS" id="CCDS4476.1">
    <molecule id="Q96S55-2"/>
</dbReference>
<dbReference type="RefSeq" id="NP_064520.2">
    <molecule id="Q96S55-1"/>
    <property type="nucleotide sequence ID" value="NM_020135.2"/>
</dbReference>
<dbReference type="RefSeq" id="NP_569079.1">
    <molecule id="Q96S55-2"/>
    <property type="nucleotide sequence ID" value="NM_130395.3"/>
</dbReference>
<dbReference type="PDB" id="3VHS">
    <property type="method" value="X-ray"/>
    <property type="resolution" value="1.90 A"/>
    <property type="chains" value="A/B=17-40"/>
</dbReference>
<dbReference type="PDB" id="3VHT">
    <property type="method" value="X-ray"/>
    <property type="resolution" value="2.40 A"/>
    <property type="chains" value="B=9-46"/>
</dbReference>
<dbReference type="PDBsum" id="3VHS"/>
<dbReference type="PDBsum" id="3VHT"/>
<dbReference type="SMR" id="Q96S55"/>
<dbReference type="BioGRID" id="121227">
    <property type="interactions" value="129"/>
</dbReference>
<dbReference type="CORUM" id="Q96S55"/>
<dbReference type="FunCoup" id="Q96S55">
    <property type="interactions" value="2447"/>
</dbReference>
<dbReference type="IntAct" id="Q96S55">
    <property type="interactions" value="56"/>
</dbReference>
<dbReference type="MINT" id="Q96S55"/>
<dbReference type="STRING" id="9606.ENSP00000370150"/>
<dbReference type="GlyGen" id="Q96S55">
    <property type="glycosylation" value="3 sites, 1 O-linked glycan (1 site)"/>
</dbReference>
<dbReference type="iPTMnet" id="Q96S55"/>
<dbReference type="PhosphoSitePlus" id="Q96S55"/>
<dbReference type="BioMuta" id="WRNIP1"/>
<dbReference type="DMDM" id="73622085"/>
<dbReference type="jPOST" id="Q96S55"/>
<dbReference type="MassIVE" id="Q96S55"/>
<dbReference type="PaxDb" id="9606-ENSP00000370150"/>
<dbReference type="PeptideAtlas" id="Q96S55"/>
<dbReference type="ProteomicsDB" id="78070">
    <molecule id="Q96S55-1"/>
</dbReference>
<dbReference type="ProteomicsDB" id="78071">
    <molecule id="Q96S55-2"/>
</dbReference>
<dbReference type="ProteomicsDB" id="78072">
    <molecule id="Q96S55-3"/>
</dbReference>
<dbReference type="ProteomicsDB" id="78073">
    <molecule id="Q96S55-4"/>
</dbReference>
<dbReference type="Pumba" id="Q96S55"/>
<dbReference type="Antibodypedia" id="9254">
    <property type="antibodies" value="230 antibodies from 32 providers"/>
</dbReference>
<dbReference type="DNASU" id="56897"/>
<dbReference type="Ensembl" id="ENST00000380764.1">
    <molecule id="Q96S55-4"/>
    <property type="protein sequence ID" value="ENSP00000370141.1"/>
    <property type="gene ID" value="ENSG00000124535.16"/>
</dbReference>
<dbReference type="Ensembl" id="ENST00000380769.8">
    <molecule id="Q96S55-3"/>
    <property type="protein sequence ID" value="ENSP00000370146.3"/>
    <property type="gene ID" value="ENSG00000124535.16"/>
</dbReference>
<dbReference type="Ensembl" id="ENST00000380771.8">
    <molecule id="Q96S55-2"/>
    <property type="protein sequence ID" value="ENSP00000370148.4"/>
    <property type="gene ID" value="ENSG00000124535.16"/>
</dbReference>
<dbReference type="Ensembl" id="ENST00000380773.9">
    <molecule id="Q96S55-1"/>
    <property type="protein sequence ID" value="ENSP00000370150.4"/>
    <property type="gene ID" value="ENSG00000124535.16"/>
</dbReference>
<dbReference type="Ensembl" id="ENST00000618555.4">
    <molecule id="Q96S55-1"/>
    <property type="protein sequence ID" value="ENSP00000477551.1"/>
    <property type="gene ID" value="ENSG00000124535.16"/>
</dbReference>
<dbReference type="GeneID" id="56897"/>
<dbReference type="KEGG" id="hsa:56897"/>
<dbReference type="MANE-Select" id="ENST00000380773.9">
    <property type="protein sequence ID" value="ENSP00000370150.4"/>
    <property type="RefSeq nucleotide sequence ID" value="NM_020135.3"/>
    <property type="RefSeq protein sequence ID" value="NP_064520.2"/>
</dbReference>
<dbReference type="UCSC" id="uc003mtz.4">
    <molecule id="Q96S55-1"/>
    <property type="organism name" value="human"/>
</dbReference>
<dbReference type="AGR" id="HGNC:20876"/>
<dbReference type="CTD" id="56897"/>
<dbReference type="DisGeNET" id="56897"/>
<dbReference type="GeneCards" id="WRNIP1"/>
<dbReference type="HGNC" id="HGNC:20876">
    <property type="gene designation" value="WRNIP1"/>
</dbReference>
<dbReference type="HPA" id="ENSG00000124535">
    <property type="expression patterns" value="Low tissue specificity"/>
</dbReference>
<dbReference type="MIM" id="608196">
    <property type="type" value="gene"/>
</dbReference>
<dbReference type="neXtProt" id="NX_Q96S55"/>
<dbReference type="OpenTargets" id="ENSG00000124535"/>
<dbReference type="PharmGKB" id="PA134982239"/>
<dbReference type="VEuPathDB" id="HostDB:ENSG00000124535"/>
<dbReference type="eggNOG" id="KOG2028">
    <property type="taxonomic scope" value="Eukaryota"/>
</dbReference>
<dbReference type="GeneTree" id="ENSGT00390000008538"/>
<dbReference type="HOGENOM" id="CLU_017985_0_2_1"/>
<dbReference type="InParanoid" id="Q96S55"/>
<dbReference type="OMA" id="RIILSQC"/>
<dbReference type="OrthoDB" id="10265467at2759"/>
<dbReference type="PAN-GO" id="Q96S55">
    <property type="GO annotations" value="5 GO annotations based on evolutionary models"/>
</dbReference>
<dbReference type="PhylomeDB" id="Q96S55"/>
<dbReference type="TreeFam" id="TF324547"/>
<dbReference type="PathwayCommons" id="Q96S55"/>
<dbReference type="SignaLink" id="Q96S55"/>
<dbReference type="BioGRID-ORCS" id="56897">
    <property type="hits" value="10 hits in 1169 CRISPR screens"/>
</dbReference>
<dbReference type="ChiTaRS" id="WRNIP1">
    <property type="organism name" value="human"/>
</dbReference>
<dbReference type="EvolutionaryTrace" id="Q96S55"/>
<dbReference type="GeneWiki" id="WRNIP1"/>
<dbReference type="GenomeRNAi" id="56897"/>
<dbReference type="Pharos" id="Q96S55">
    <property type="development level" value="Tbio"/>
</dbReference>
<dbReference type="PRO" id="PR:Q96S55"/>
<dbReference type="Proteomes" id="UP000005640">
    <property type="component" value="Chromosome 6"/>
</dbReference>
<dbReference type="RNAct" id="Q96S55">
    <property type="molecule type" value="protein"/>
</dbReference>
<dbReference type="Bgee" id="ENSG00000124535">
    <property type="expression patterns" value="Expressed in tendon of biceps brachii and 183 other cell types or tissues"/>
</dbReference>
<dbReference type="GO" id="GO:0016020">
    <property type="term" value="C:membrane"/>
    <property type="evidence" value="ECO:0007005"/>
    <property type="project" value="UniProtKB"/>
</dbReference>
<dbReference type="GO" id="GO:0005634">
    <property type="term" value="C:nucleus"/>
    <property type="evidence" value="ECO:0000314"/>
    <property type="project" value="UniProtKB"/>
</dbReference>
<dbReference type="GO" id="GO:0048471">
    <property type="term" value="C:perinuclear region of cytoplasm"/>
    <property type="evidence" value="ECO:0000314"/>
    <property type="project" value="UniProtKB"/>
</dbReference>
<dbReference type="GO" id="GO:0005524">
    <property type="term" value="F:ATP binding"/>
    <property type="evidence" value="ECO:0007669"/>
    <property type="project" value="UniProtKB-KW"/>
</dbReference>
<dbReference type="GO" id="GO:0016887">
    <property type="term" value="F:ATP hydrolysis activity"/>
    <property type="evidence" value="ECO:0000315"/>
    <property type="project" value="UniProtKB"/>
</dbReference>
<dbReference type="GO" id="GO:0003677">
    <property type="term" value="F:DNA binding"/>
    <property type="evidence" value="ECO:0007669"/>
    <property type="project" value="InterPro"/>
</dbReference>
<dbReference type="GO" id="GO:0008047">
    <property type="term" value="F:enzyme activator activity"/>
    <property type="evidence" value="ECO:0000318"/>
    <property type="project" value="GO_Central"/>
</dbReference>
<dbReference type="GO" id="GO:0042802">
    <property type="term" value="F:identical protein binding"/>
    <property type="evidence" value="ECO:0000353"/>
    <property type="project" value="IntAct"/>
</dbReference>
<dbReference type="GO" id="GO:0017116">
    <property type="term" value="F:single-stranded DNA helicase activity"/>
    <property type="evidence" value="ECO:0000318"/>
    <property type="project" value="GO_Central"/>
</dbReference>
<dbReference type="GO" id="GO:0008270">
    <property type="term" value="F:zinc ion binding"/>
    <property type="evidence" value="ECO:0007669"/>
    <property type="project" value="UniProtKB-KW"/>
</dbReference>
<dbReference type="GO" id="GO:0000731">
    <property type="term" value="P:DNA synthesis involved in DNA repair"/>
    <property type="evidence" value="ECO:0000314"/>
    <property type="project" value="UniProtKB"/>
</dbReference>
<dbReference type="GO" id="GO:0006261">
    <property type="term" value="P:DNA-templated DNA replication"/>
    <property type="evidence" value="ECO:0000318"/>
    <property type="project" value="GO_Central"/>
</dbReference>
<dbReference type="GO" id="GO:0045087">
    <property type="term" value="P:innate immune response"/>
    <property type="evidence" value="ECO:0007669"/>
    <property type="project" value="UniProtKB-KW"/>
</dbReference>
<dbReference type="GO" id="GO:0030174">
    <property type="term" value="P:regulation of DNA-templated DNA replication initiation"/>
    <property type="evidence" value="ECO:0000314"/>
    <property type="project" value="UniProtKB"/>
</dbReference>
<dbReference type="CDD" id="cd00009">
    <property type="entry name" value="AAA"/>
    <property type="match status" value="1"/>
</dbReference>
<dbReference type="CDD" id="cd18139">
    <property type="entry name" value="HLD_clamp_RarA"/>
    <property type="match status" value="1"/>
</dbReference>
<dbReference type="FunFam" id="1.10.3710.10:FF:000002">
    <property type="entry name" value="ATPase WRNIP1 isoform 1"/>
    <property type="match status" value="1"/>
</dbReference>
<dbReference type="FunFam" id="1.10.8.60:FF:000054">
    <property type="entry name" value="ATPase WRNIP1 isoform 1"/>
    <property type="match status" value="1"/>
</dbReference>
<dbReference type="FunFam" id="3.30.160.60:FF:000331">
    <property type="entry name" value="E3 ubiquitin-protein ligase RAD18"/>
    <property type="match status" value="1"/>
</dbReference>
<dbReference type="FunFam" id="1.20.272.10:FF:000001">
    <property type="entry name" value="Putative AAA family ATPase"/>
    <property type="match status" value="1"/>
</dbReference>
<dbReference type="FunFam" id="3.40.50.300:FF:000137">
    <property type="entry name" value="Replication-associated recombination protein A"/>
    <property type="match status" value="1"/>
</dbReference>
<dbReference type="Gene3D" id="1.10.8.60">
    <property type="match status" value="1"/>
</dbReference>
<dbReference type="Gene3D" id="1.20.272.10">
    <property type="match status" value="1"/>
</dbReference>
<dbReference type="Gene3D" id="3.30.160.60">
    <property type="entry name" value="Classic Zinc Finger"/>
    <property type="match status" value="1"/>
</dbReference>
<dbReference type="Gene3D" id="1.10.3710.10">
    <property type="entry name" value="DNA polymerase III clamp loader subunits, C-terminal domain"/>
    <property type="match status" value="1"/>
</dbReference>
<dbReference type="Gene3D" id="3.40.50.300">
    <property type="entry name" value="P-loop containing nucleotide triphosphate hydrolases"/>
    <property type="match status" value="1"/>
</dbReference>
<dbReference type="InterPro" id="IPR003593">
    <property type="entry name" value="AAA+_ATPase"/>
</dbReference>
<dbReference type="InterPro" id="IPR032423">
    <property type="entry name" value="AAA_assoc_2"/>
</dbReference>
<dbReference type="InterPro" id="IPR051314">
    <property type="entry name" value="AAA_ATPase_RarA/MGS1/WRNIP1"/>
</dbReference>
<dbReference type="InterPro" id="IPR003959">
    <property type="entry name" value="ATPase_AAA_core"/>
</dbReference>
<dbReference type="InterPro" id="IPR008921">
    <property type="entry name" value="DNA_pol3_clamp-load_cplx_C"/>
</dbReference>
<dbReference type="InterPro" id="IPR021886">
    <property type="entry name" value="MgsA_C"/>
</dbReference>
<dbReference type="InterPro" id="IPR027417">
    <property type="entry name" value="P-loop_NTPase"/>
</dbReference>
<dbReference type="InterPro" id="IPR006642">
    <property type="entry name" value="Rad18_UBZ4"/>
</dbReference>
<dbReference type="InterPro" id="IPR040539">
    <property type="entry name" value="Znf-WRNIP1_ubi"/>
</dbReference>
<dbReference type="PANTHER" id="PTHR13779:SF7">
    <property type="entry name" value="ATPASE WRNIP1"/>
    <property type="match status" value="1"/>
</dbReference>
<dbReference type="PANTHER" id="PTHR13779">
    <property type="entry name" value="WERNER HELICASE-INTERACTING PROTEIN 1 FAMILY MEMBER"/>
    <property type="match status" value="1"/>
</dbReference>
<dbReference type="Pfam" id="PF00004">
    <property type="entry name" value="AAA"/>
    <property type="match status" value="1"/>
</dbReference>
<dbReference type="Pfam" id="PF16193">
    <property type="entry name" value="AAA_assoc_2"/>
    <property type="match status" value="1"/>
</dbReference>
<dbReference type="Pfam" id="PF12002">
    <property type="entry name" value="MgsA_C"/>
    <property type="match status" value="1"/>
</dbReference>
<dbReference type="Pfam" id="PF18279">
    <property type="entry name" value="zf-WRNIP1_ubi"/>
    <property type="match status" value="1"/>
</dbReference>
<dbReference type="SMART" id="SM00382">
    <property type="entry name" value="AAA"/>
    <property type="match status" value="1"/>
</dbReference>
<dbReference type="SMART" id="SM00734">
    <property type="entry name" value="ZnF_Rad18"/>
    <property type="match status" value="1"/>
</dbReference>
<dbReference type="SUPFAM" id="SSF52540">
    <property type="entry name" value="P-loop containing nucleoside triphosphate hydrolases"/>
    <property type="match status" value="1"/>
</dbReference>
<dbReference type="SUPFAM" id="SSF48019">
    <property type="entry name" value="post-AAA+ oligomerization domain-like"/>
    <property type="match status" value="1"/>
</dbReference>
<dbReference type="PROSITE" id="PS51908">
    <property type="entry name" value="ZF_UBZ4"/>
    <property type="match status" value="1"/>
</dbReference>
<protein>
    <recommendedName>
        <fullName>ATPase WRNIP1</fullName>
        <ecNumber evidence="6">3.6.1.-</ecNumber>
    </recommendedName>
    <alternativeName>
        <fullName>Werner helicase-interacting protein 1</fullName>
    </alternativeName>
</protein>
<organism>
    <name type="scientific">Homo sapiens</name>
    <name type="common">Human</name>
    <dbReference type="NCBI Taxonomy" id="9606"/>
    <lineage>
        <taxon>Eukaryota</taxon>
        <taxon>Metazoa</taxon>
        <taxon>Chordata</taxon>
        <taxon>Craniata</taxon>
        <taxon>Vertebrata</taxon>
        <taxon>Euteleostomi</taxon>
        <taxon>Mammalia</taxon>
        <taxon>Eutheria</taxon>
        <taxon>Euarchontoglires</taxon>
        <taxon>Primates</taxon>
        <taxon>Haplorrhini</taxon>
        <taxon>Catarrhini</taxon>
        <taxon>Hominidae</taxon>
        <taxon>Homo</taxon>
    </lineage>
</organism>
<feature type="chain" id="PRO_0000084785" description="ATPase WRNIP1">
    <location>
        <begin position="1"/>
        <end position="665"/>
    </location>
</feature>
<feature type="zinc finger region" description="UBZ4-type" evidence="3">
    <location>
        <begin position="17"/>
        <end position="44"/>
    </location>
</feature>
<feature type="region of interest" description="Disordered" evidence="4">
    <location>
        <begin position="48"/>
        <end position="190"/>
    </location>
</feature>
<feature type="compositionally biased region" description="Polar residues" evidence="4">
    <location>
        <begin position="76"/>
        <end position="89"/>
    </location>
</feature>
<feature type="compositionally biased region" description="Acidic residues" evidence="4">
    <location>
        <begin position="92"/>
        <end position="104"/>
    </location>
</feature>
<feature type="compositionally biased region" description="Low complexity" evidence="4">
    <location>
        <begin position="130"/>
        <end position="155"/>
    </location>
</feature>
<feature type="compositionally biased region" description="Acidic residues" evidence="4">
    <location>
        <begin position="159"/>
        <end position="184"/>
    </location>
</feature>
<feature type="binding site" evidence="3 9 22 23">
    <location>
        <position position="20"/>
    </location>
    <ligand>
        <name>Zn(2+)</name>
        <dbReference type="ChEBI" id="CHEBI:29105"/>
    </ligand>
</feature>
<feature type="binding site" evidence="3 9 22 23">
    <location>
        <position position="23"/>
    </location>
    <ligand>
        <name>Zn(2+)</name>
        <dbReference type="ChEBI" id="CHEBI:29105"/>
    </ligand>
</feature>
<feature type="binding site" evidence="9 22">
    <location>
        <position position="31"/>
    </location>
    <ligand>
        <name>Zn(2+)</name>
        <dbReference type="ChEBI" id="CHEBI:29105"/>
    </ligand>
</feature>
<feature type="binding site" evidence="3 9 22 23">
    <location>
        <position position="35"/>
    </location>
    <ligand>
        <name>Zn(2+)</name>
        <dbReference type="ChEBI" id="CHEBI:29105"/>
    </ligand>
</feature>
<feature type="binding site" evidence="3 9 23">
    <location>
        <position position="39"/>
    </location>
    <ligand>
        <name>Zn(2+)</name>
        <dbReference type="ChEBI" id="CHEBI:29105"/>
    </ligand>
</feature>
<feature type="binding site" evidence="1">
    <location>
        <begin position="270"/>
        <end position="276"/>
    </location>
    <ligand>
        <name>ATP</name>
        <dbReference type="ChEBI" id="CHEBI:30616"/>
    </ligand>
</feature>
<feature type="modified residue" description="Phosphoserine" evidence="30">
    <location>
        <position position="65"/>
    </location>
</feature>
<feature type="modified residue" description="Phosphoserine" evidence="25 28 30">
    <location>
        <position position="75"/>
    </location>
</feature>
<feature type="modified residue" description="Phosphothreonine" evidence="25 27">
    <location>
        <position position="85"/>
    </location>
</feature>
<feature type="modified residue" description="Phosphoserine" evidence="25 27">
    <location>
        <position position="91"/>
    </location>
</feature>
<feature type="modified residue" description="Phosphoserine" evidence="25 27">
    <location>
        <position position="92"/>
    </location>
</feature>
<feature type="modified residue" description="Phosphothreonine" evidence="25">
    <location>
        <position position="116"/>
    </location>
</feature>
<feature type="modified residue" description="Phosphoserine" evidence="30">
    <location>
        <position position="139"/>
    </location>
</feature>
<feature type="modified residue" description="Phosphoserine" evidence="28 29 30 31">
    <location>
        <position position="153"/>
    </location>
</feature>
<feature type="modified residue" description="Phosphotyrosine" evidence="24">
    <location>
        <position position="534"/>
    </location>
</feature>
<feature type="modified residue" description="Phosphotyrosine" evidence="24">
    <location>
        <position position="562"/>
    </location>
</feature>
<feature type="modified residue" description="N6-acetyllysine; alternate" evidence="26">
    <location>
        <position position="633"/>
    </location>
</feature>
<feature type="cross-link" description="Glycyl lysine isopeptide (Lys-Gly) (interchain with G-Cter in ubiquitin)" evidence="7">
    <location>
        <position position="81"/>
    </location>
</feature>
<feature type="cross-link" description="Glycyl lysine isopeptide (Lys-Gly) (interchain with G-Cter in ubiquitin)" evidence="7">
    <location>
        <position position="141"/>
    </location>
</feature>
<feature type="cross-link" description="Glycyl lysine isopeptide (Lys-Gly) (interchain with G-Cter in ubiquitin)" evidence="7">
    <location>
        <position position="225"/>
    </location>
</feature>
<feature type="cross-link" description="Glycyl lysine isopeptide (Lys-Gly) (interchain with G-Cter in ubiquitin)" evidence="7">
    <location>
        <position position="301"/>
    </location>
</feature>
<feature type="cross-link" description="Glycyl lysine isopeptide (Lys-Gly) (interchain with G-Cter in ubiquitin)" evidence="7">
    <location>
        <position position="310"/>
    </location>
</feature>
<feature type="cross-link" description="Glycyl lysine isopeptide (Lys-Gly) (interchain with G-Cter in ubiquitin)" evidence="7">
    <location>
        <position position="316"/>
    </location>
</feature>
<feature type="cross-link" description="Glycyl lysine isopeptide (Lys-Gly) (interchain with G-Cter in ubiquitin)" evidence="7">
    <location>
        <position position="322"/>
    </location>
</feature>
<feature type="cross-link" description="Glycyl lysine isopeptide (Lys-Gly) (interchain with G-Cter in ubiquitin)" evidence="7">
    <location>
        <position position="335"/>
    </location>
</feature>
<feature type="cross-link" description="Glycyl lysine isopeptide (Lys-Gly) (interchain with G-Cter in SUMO2); alternate" evidence="32">
    <location>
        <position position="482"/>
    </location>
</feature>
<feature type="cross-link" description="Glycyl lysine isopeptide (Lys-Gly) (interchain with G-Cter in ubiquitin); alternate" evidence="7">
    <location>
        <position position="482"/>
    </location>
</feature>
<feature type="cross-link" description="Glycyl lysine isopeptide (Lys-Gly) (interchain with G-Cter in ubiquitin)" evidence="7">
    <location>
        <position position="627"/>
    </location>
</feature>
<feature type="cross-link" description="Glycyl lysine isopeptide (Lys-Gly) (interchain with G-Cter in ubiquitin); alternate" evidence="7">
    <location>
        <position position="633"/>
    </location>
</feature>
<feature type="cross-link" description="Glycyl lysine isopeptide (Lys-Gly) (interchain with G-Cter in ubiquitin)" evidence="7">
    <location>
        <position position="636"/>
    </location>
</feature>
<feature type="splice variant" id="VSP_051782" description="In isoform 4." evidence="11">
    <location>
        <begin position="1"/>
        <end position="384"/>
    </location>
</feature>
<feature type="splice variant" id="VSP_051781" description="In isoform 3." evidence="11">
    <location>
        <begin position="1"/>
        <end position="220"/>
    </location>
</feature>
<feature type="splice variant" id="VSP_051783" description="In isoform 2." evidence="11 12 13">
    <location>
        <begin position="338"/>
        <end position="362"/>
    </location>
</feature>
<feature type="mutagenesis site" description="Reduced affinity for ubiquitin." evidence="9">
    <original>V</original>
    <variation>A</variation>
    <location>
        <position position="18"/>
    </location>
</feature>
<feature type="mutagenesis site" description="Loss of affinity for ubiquitin." evidence="9">
    <original>P</original>
    <variation>A</variation>
    <location>
        <position position="21"/>
    </location>
</feature>
<feature type="mutagenesis site" description="Reduced affinity for ubiquitin." evidence="9">
    <original>V</original>
    <variation>A</variation>
    <location>
        <position position="22"/>
    </location>
</feature>
<feature type="mutagenesis site" description="Loss of affinity for ubiquitin." evidence="9">
    <original>I</original>
    <variation>A</variation>
    <location>
        <position position="32"/>
    </location>
</feature>
<feature type="mutagenesis site" description="Loss of affinity for ubiquitin." evidence="9">
    <original>N</original>
    <variation>A</variation>
    <location>
        <position position="33"/>
    </location>
</feature>
<feature type="mutagenesis site" description="Loss of affinity for ubiquitin." evidence="9">
    <original>L</original>
    <variation>A</variation>
    <location>
        <position position="36"/>
    </location>
</feature>
<feature type="mutagenesis site" description="Loss of affinity for ubiquitin." evidence="9">
    <original>D</original>
    <variation>A</variation>
    <location>
        <position position="37"/>
    </location>
</feature>
<feature type="mutagenesis site" description="Loss of affinity for ubiquitin." evidence="9">
    <original>L</original>
    <variation>A</variation>
    <location>
        <position position="40"/>
    </location>
</feature>
<feature type="mutagenesis site" description="Normal affinity for ubiquitin." evidence="9">
    <original>L</original>
    <variation>A</variation>
    <location>
        <position position="41"/>
    </location>
</feature>
<feature type="mutagenesis site" description="Normal affinity for ubiquitin." evidence="9">
    <original>L</original>
    <variation>A</variation>
    <location>
        <position position="42"/>
    </location>
</feature>
<feature type="mutagenesis site" description="Normal affinity for ubiquitin." evidence="9">
    <original>P</original>
    <variation>A</variation>
    <location>
        <position position="44"/>
    </location>
</feature>
<feature type="mutagenesis site" description="Loss of ATPase activity." evidence="6">
    <original>T</original>
    <variation>A</variation>
    <location>
        <position position="294"/>
    </location>
</feature>
<feature type="sequence conflict" description="In Ref. 1; BAB60709." evidence="14" ref="1">
    <original>A</original>
    <variation>V</variation>
    <location>
        <position position="144"/>
    </location>
</feature>
<feature type="sequence conflict" description="In Ref. 3; BAD92960." evidence="14" ref="3">
    <location>
        <begin position="170"/>
        <end position="173"/>
    </location>
</feature>
<feature type="sequence conflict" description="In Ref. 1; BAB60709." evidence="14" ref="1">
    <original>I</original>
    <variation>N</variation>
    <location>
        <position position="265"/>
    </location>
</feature>
<feature type="sequence conflict" description="In Ref. 2; BAB15383." evidence="14" ref="2">
    <original>L</original>
    <variation>F</variation>
    <location>
        <position position="377"/>
    </location>
</feature>
<feature type="sequence conflict" description="In Ref. 3; BAD97313." evidence="14" ref="3">
    <original>H</original>
    <variation>Y</variation>
    <location>
        <position position="499"/>
    </location>
</feature>
<feature type="sequence conflict" description="In Ref. 2; BAB15383." evidence="14" ref="2">
    <original>E</original>
    <variation>G</variation>
    <location>
        <position position="545"/>
    </location>
</feature>
<feature type="sequence conflict" description="In Ref. 1; BAB60709." evidence="14" ref="1">
    <original>I</original>
    <variation>M</variation>
    <location>
        <position position="568"/>
    </location>
</feature>
<feature type="sequence conflict" description="In Ref. 1; BAB60709." evidence="14" ref="1">
    <original>L</original>
    <variation>F</variation>
    <location>
        <position position="576"/>
    </location>
</feature>
<feature type="strand" evidence="33">
    <location>
        <begin position="17"/>
        <end position="19"/>
    </location>
</feature>
<feature type="turn" evidence="33">
    <location>
        <begin position="21"/>
        <end position="23"/>
    </location>
</feature>
<feature type="strand" evidence="33">
    <location>
        <begin position="26"/>
        <end position="28"/>
    </location>
</feature>
<feature type="helix" evidence="33">
    <location>
        <begin position="29"/>
        <end position="31"/>
    </location>
</feature>
<feature type="helix" evidence="33">
    <location>
        <begin position="32"/>
        <end position="39"/>
    </location>
</feature>
<gene>
    <name evidence="21" type="primary">WRNIP1</name>
    <name evidence="18" type="synonym">WHIP</name>
</gene>
<sequence length="665" mass="72133">MEVSGPEDDPFLSQLHQVQCPVCQQMMPAAHINSHLDRCLLLHPAGHAEPAAGSHRAGERAKGPSPPGAKRRRLSESSALKQPATPTAAESSEGEGEEGDDGGETESRESYDAPPTPSGARLIPDFPVARSSSPGRKGSGKRPAAAAAAGSASPRSWDEAEAQEEEEAVGDGDGDGDADADGEDDPGHWDADAAEAATAFGASGGGRPHPRALAAEEIRQMLQGKPLADTMRPDTLQDYFGQSKAVGQDTLLRSLLETNEIPSLILWGPPGCGKTTLAHIIASNSKKHSIRFVTLSATNAKTNDVRDVIKQAQNEKSFFKRKTILFIDEIHRFNKSQQDTFLPHVECGTITLIGATTENPSFQVNAALLSRCRVIVLEKLPVEAMVTILMRAINSLGIHVLDSSRPTDPLSHSSNSSSEPAMFIEDKAVDTLAYLSDGDARAGLNGLQLAVLARLSSRKMFCKKSGQSYSPSRVLITENDVKEGLQRSHILYDRAGEEHYNCISALHKSMRGSDQNASLYWLARMLEGGEDPLYVARRLVRFASEDIGLADPSALTQAVAAYQGCHFIGMPECEVLLAQCVVYFARAPKSIEVYSAYNNVKACLRNHQGPLPPVPLHLRNAPTRLMKDLGYGKGYKYNPMYSEPVDQEYLPEELRGVDFFKQRRC</sequence>
<accession>Q96S55</accession>
<accession>B2RDB0</accession>
<accession>Q53EP6</accession>
<accession>Q59ET8</accession>
<accession>Q5W0E2</accession>
<accession>Q5W0E4</accession>
<accession>Q8WV26</accession>
<accession>Q9H681</accession>
<accession>Q9NRJ6</accession>
<comment type="function">
    <text evidence="6 10">Functions as a modulator of initiation or reinitiation events during DNA polymerase delta-mediated DNA synthesis. In the presence of ATP, stimulation of DNA polymerase delta-mediated DNA synthesis is decreased. Also plays a role in the innate immune defense against viruses. Stabilizes the RIGI dsRNA interaction and promotes RIGI 'Lys-63'-linked polyubiquitination. In turn, RIGI transmits the signal through mitochondrial MAVS.</text>
</comment>
<comment type="catalytic activity">
    <reaction evidence="6">
        <text>ATP + H2O = ADP + phosphate + H(+)</text>
        <dbReference type="Rhea" id="RHEA:13065"/>
        <dbReference type="ChEBI" id="CHEBI:15377"/>
        <dbReference type="ChEBI" id="CHEBI:15378"/>
        <dbReference type="ChEBI" id="CHEBI:30616"/>
        <dbReference type="ChEBI" id="CHEBI:43474"/>
        <dbReference type="ChEBI" id="CHEBI:456216"/>
    </reaction>
</comment>
<comment type="subunit">
    <text evidence="2 6 7 8 10">Forms homooligomers (PubMed:18842586), possibly octamers. Directly interacts with POLD1, POLD2 and POLD4 (PubMed:15670210). Interacts with the N-terminal domain of WRN (By similarity). Interacts (via UBZ4-type zinc finger) with monoubiquitin and polyubiquitin (PubMed:17550899, PubMed:18842586). Interacts with TRIM14 and PPP6C; these interactions positively regulate the RIGI signaling pathway (PubMed:29053956).</text>
</comment>
<comment type="interaction">
    <interactant intactId="EBI-2513471">
        <id>Q96S55</id>
    </interactant>
    <interactant intactId="EBI-716569">
        <id>P28340</id>
        <label>POLD1</label>
    </interactant>
    <organismsDiffer>false</organismsDiffer>
    <experiments>2</experiments>
</comment>
<comment type="interaction">
    <interactant intactId="EBI-2513471">
        <id>Q96S55</id>
    </interactant>
    <interactant intactId="EBI-372354">
        <id>P49005</id>
        <label>POLD2</label>
    </interactant>
    <organismsDiffer>false</organismsDiffer>
    <experiments>2</experiments>
</comment>
<comment type="interaction">
    <interactant intactId="EBI-2513471">
        <id>Q96S55</id>
    </interactant>
    <interactant intactId="EBI-864968">
        <id>Q9HCU8</id>
        <label>POLD4</label>
    </interactant>
    <organismsDiffer>false</organismsDiffer>
    <experiments>2</experiments>
</comment>
<comment type="interaction">
    <interactant intactId="EBI-2513471">
        <id>Q96S55</id>
    </interactant>
    <interactant intactId="EBI-995350">
        <id>O95786</id>
        <label>RIGI</label>
    </interactant>
    <organismsDiffer>false</organismsDiffer>
    <experiments>2</experiments>
</comment>
<comment type="interaction">
    <interactant intactId="EBI-2513471">
        <id>Q96S55</id>
    </interactant>
    <interactant intactId="EBI-74615">
        <id>Q9H0E2</id>
        <label>TOLLIP</label>
    </interactant>
    <organismsDiffer>false</organismsDiffer>
    <experiments>2</experiments>
</comment>
<comment type="interaction">
    <interactant intactId="EBI-2513471">
        <id>Q96S55</id>
    </interactant>
    <interactant intactId="EBI-2513471">
        <id>Q96S55</id>
        <label>WRNIP1</label>
    </interactant>
    <organismsDiffer>false</organismsDiffer>
    <experiments>2</experiments>
</comment>
<comment type="subcellular location">
    <subcellularLocation>
        <location evidence="8">Nucleus</location>
    </subcellularLocation>
    <subcellularLocation>
        <location evidence="10">Cytoplasm</location>
    </subcellularLocation>
    <text evidence="8 10">Colocalizes with WRN in granular structures in the nucleus.</text>
</comment>
<comment type="alternative products">
    <event type="alternative splicing"/>
    <isoform>
        <id>Q96S55-1</id>
        <name evidence="5">1</name>
        <sequence type="displayed"/>
    </isoform>
    <isoform>
        <id>Q96S55-2</id>
        <name evidence="11">2</name>
        <sequence type="described" ref="VSP_051783"/>
    </isoform>
    <isoform>
        <id>Q96S55-3</id>
        <name evidence="11">3</name>
        <sequence type="described" ref="VSP_051781"/>
    </isoform>
    <isoform>
        <id>Q96S55-4</id>
        <name evidence="11">4</name>
        <sequence type="described" ref="VSP_051782"/>
    </isoform>
</comment>
<comment type="tissue specificity">
    <text evidence="5">Ubiquitously expressed.</text>
</comment>
<comment type="domain">
    <text evidence="9">The UBZ4-type zinc finger binds ubiquitin.</text>
</comment>
<comment type="PTM">
    <text evidence="7">Sumoylated with SUMO1 and SUMO2/3.</text>
</comment>
<comment type="similarity">
    <text evidence="14">Belongs to the AAA ATPase family. RarA/MGS1/WRNIP1 subfamily.</text>
</comment>
<comment type="sequence caution" evidence="14">
    <conflict type="erroneous initiation">
        <sequence resource="EMBL-CDS" id="AAF80563"/>
    </conflict>
</comment>
<comment type="sequence caution" evidence="14">
    <conflict type="erroneous initiation">
        <sequence resource="EMBL-CDS" id="BAB15383"/>
    </conflict>
</comment>
<evidence type="ECO:0000250" key="1">
    <source>
        <dbReference type="UniProtKB" id="P55072"/>
    </source>
</evidence>
<evidence type="ECO:0000250" key="2">
    <source>
        <dbReference type="UniProtKB" id="Q91XU0"/>
    </source>
</evidence>
<evidence type="ECO:0000255" key="3">
    <source>
        <dbReference type="PROSITE-ProRule" id="PRU01256"/>
    </source>
</evidence>
<evidence type="ECO:0000256" key="4">
    <source>
        <dbReference type="SAM" id="MobiDB-lite"/>
    </source>
</evidence>
<evidence type="ECO:0000269" key="5">
    <source>
    </source>
</evidence>
<evidence type="ECO:0000269" key="6">
    <source>
    </source>
</evidence>
<evidence type="ECO:0000269" key="7">
    <source>
    </source>
</evidence>
<evidence type="ECO:0000269" key="8">
    <source>
    </source>
</evidence>
<evidence type="ECO:0000269" key="9">
    <source>
    </source>
</evidence>
<evidence type="ECO:0000269" key="10">
    <source>
    </source>
</evidence>
<evidence type="ECO:0000303" key="11">
    <source>
    </source>
</evidence>
<evidence type="ECO:0000303" key="12">
    <source>
    </source>
</evidence>
<evidence type="ECO:0000303" key="13">
    <source>
    </source>
</evidence>
<evidence type="ECO:0000305" key="14"/>
<evidence type="ECO:0000312" key="15">
    <source>
        <dbReference type="EMBL" id="AAH18923.1"/>
    </source>
</evidence>
<evidence type="ECO:0000312" key="16">
    <source>
        <dbReference type="EMBL" id="AL139092"/>
    </source>
</evidence>
<evidence type="ECO:0000312" key="17">
    <source>
        <dbReference type="EMBL" id="BAB15383.1"/>
    </source>
</evidence>
<evidence type="ECO:0000312" key="18">
    <source>
        <dbReference type="EMBL" id="BAB60709.1"/>
    </source>
</evidence>
<evidence type="ECO:0000312" key="19">
    <source>
        <dbReference type="EMBL" id="BAD92960.1"/>
    </source>
</evidence>
<evidence type="ECO:0000312" key="20">
    <source>
        <dbReference type="EMBL" id="BAD97313.1"/>
    </source>
</evidence>
<evidence type="ECO:0000312" key="21">
    <source>
        <dbReference type="HGNC" id="HGNC:20876"/>
    </source>
</evidence>
<evidence type="ECO:0007744" key="22">
    <source>
        <dbReference type="PDB" id="3VHS"/>
    </source>
</evidence>
<evidence type="ECO:0007744" key="23">
    <source>
        <dbReference type="PDB" id="3VHT"/>
    </source>
</evidence>
<evidence type="ECO:0007744" key="24">
    <source>
    </source>
</evidence>
<evidence type="ECO:0007744" key="25">
    <source>
    </source>
</evidence>
<evidence type="ECO:0007744" key="26">
    <source>
    </source>
</evidence>
<evidence type="ECO:0007744" key="27">
    <source>
    </source>
</evidence>
<evidence type="ECO:0007744" key="28">
    <source>
    </source>
</evidence>
<evidence type="ECO:0007744" key="29">
    <source>
    </source>
</evidence>
<evidence type="ECO:0007744" key="30">
    <source>
    </source>
</evidence>
<evidence type="ECO:0007744" key="31">
    <source>
    </source>
</evidence>
<evidence type="ECO:0007744" key="32">
    <source>
    </source>
</evidence>
<evidence type="ECO:0007829" key="33">
    <source>
        <dbReference type="PDB" id="3VHS"/>
    </source>
</evidence>
<name>WRIP1_HUMAN</name>
<proteinExistence type="evidence at protein level"/>
<reference evidence="14 18" key="1">
    <citation type="journal article" date="2001" name="J. Biol. Chem.">
        <title>A novel protein interacts with the Werner's syndrome gene product physically and functionally.</title>
        <authorList>
            <person name="Kawabe Y."/>
            <person name="Branzei D."/>
            <person name="Hayashi T."/>
            <person name="Suzuki H."/>
            <person name="Masuko T."/>
            <person name="Onoda F."/>
            <person name="Heo S.-J."/>
            <person name="Ikeda H."/>
            <person name="Shimamoto A."/>
            <person name="Furuichi Y."/>
            <person name="Seki M."/>
            <person name="Enomoto T."/>
        </authorList>
    </citation>
    <scope>NUCLEOTIDE SEQUENCE [MRNA] (ISOFORM 1)</scope>
    <scope>TISSUE SPECIFICITY</scope>
    <source>
        <tissue>Cervix carcinoma</tissue>
    </source>
</reference>
<reference evidence="14 17" key="2">
    <citation type="journal article" date="2004" name="Nat. Genet.">
        <title>Complete sequencing and characterization of 21,243 full-length human cDNAs.</title>
        <authorList>
            <person name="Ota T."/>
            <person name="Suzuki Y."/>
            <person name="Nishikawa T."/>
            <person name="Otsuki T."/>
            <person name="Sugiyama T."/>
            <person name="Irie R."/>
            <person name="Wakamatsu A."/>
            <person name="Hayashi K."/>
            <person name="Sato H."/>
            <person name="Nagai K."/>
            <person name="Kimura K."/>
            <person name="Makita H."/>
            <person name="Sekine M."/>
            <person name="Obayashi M."/>
            <person name="Nishi T."/>
            <person name="Shibahara T."/>
            <person name="Tanaka T."/>
            <person name="Ishii S."/>
            <person name="Yamamoto J."/>
            <person name="Saito K."/>
            <person name="Kawai Y."/>
            <person name="Isono Y."/>
            <person name="Nakamura Y."/>
            <person name="Nagahari K."/>
            <person name="Murakami K."/>
            <person name="Yasuda T."/>
            <person name="Iwayanagi T."/>
            <person name="Wagatsuma M."/>
            <person name="Shiratori A."/>
            <person name="Sudo H."/>
            <person name="Hosoiri T."/>
            <person name="Kaku Y."/>
            <person name="Kodaira H."/>
            <person name="Kondo H."/>
            <person name="Sugawara M."/>
            <person name="Takahashi M."/>
            <person name="Kanda K."/>
            <person name="Yokoi T."/>
            <person name="Furuya T."/>
            <person name="Kikkawa E."/>
            <person name="Omura Y."/>
            <person name="Abe K."/>
            <person name="Kamihara K."/>
            <person name="Katsuta N."/>
            <person name="Sato K."/>
            <person name="Tanikawa M."/>
            <person name="Yamazaki M."/>
            <person name="Ninomiya K."/>
            <person name="Ishibashi T."/>
            <person name="Yamashita H."/>
            <person name="Murakawa K."/>
            <person name="Fujimori K."/>
            <person name="Tanai H."/>
            <person name="Kimata M."/>
            <person name="Watanabe M."/>
            <person name="Hiraoka S."/>
            <person name="Chiba Y."/>
            <person name="Ishida S."/>
            <person name="Ono Y."/>
            <person name="Takiguchi S."/>
            <person name="Watanabe S."/>
            <person name="Yosida M."/>
            <person name="Hotuta T."/>
            <person name="Kusano J."/>
            <person name="Kanehori K."/>
            <person name="Takahashi-Fujii A."/>
            <person name="Hara H."/>
            <person name="Tanase T.-O."/>
            <person name="Nomura Y."/>
            <person name="Togiya S."/>
            <person name="Komai F."/>
            <person name="Hara R."/>
            <person name="Takeuchi K."/>
            <person name="Arita M."/>
            <person name="Imose N."/>
            <person name="Musashino K."/>
            <person name="Yuuki H."/>
            <person name="Oshima A."/>
            <person name="Sasaki N."/>
            <person name="Aotsuka S."/>
            <person name="Yoshikawa Y."/>
            <person name="Matsunawa H."/>
            <person name="Ichihara T."/>
            <person name="Shiohata N."/>
            <person name="Sano S."/>
            <person name="Moriya S."/>
            <person name="Momiyama H."/>
            <person name="Satoh N."/>
            <person name="Takami S."/>
            <person name="Terashima Y."/>
            <person name="Suzuki O."/>
            <person name="Nakagawa S."/>
            <person name="Senoh A."/>
            <person name="Mizoguchi H."/>
            <person name="Goto Y."/>
            <person name="Shimizu F."/>
            <person name="Wakebe H."/>
            <person name="Hishigaki H."/>
            <person name="Watanabe T."/>
            <person name="Sugiyama A."/>
            <person name="Takemoto M."/>
            <person name="Kawakami B."/>
            <person name="Yamazaki M."/>
            <person name="Watanabe K."/>
            <person name="Kumagai A."/>
            <person name="Itakura S."/>
            <person name="Fukuzumi Y."/>
            <person name="Fujimori Y."/>
            <person name="Komiyama M."/>
            <person name="Tashiro H."/>
            <person name="Tanigami A."/>
            <person name="Fujiwara T."/>
            <person name="Ono T."/>
            <person name="Yamada K."/>
            <person name="Fujii Y."/>
            <person name="Ozaki K."/>
            <person name="Hirao M."/>
            <person name="Ohmori Y."/>
            <person name="Kawabata A."/>
            <person name="Hikiji T."/>
            <person name="Kobatake N."/>
            <person name="Inagaki H."/>
            <person name="Ikema Y."/>
            <person name="Okamoto S."/>
            <person name="Okitani R."/>
            <person name="Kawakami T."/>
            <person name="Noguchi S."/>
            <person name="Itoh T."/>
            <person name="Shigeta K."/>
            <person name="Senba T."/>
            <person name="Matsumura K."/>
            <person name="Nakajima Y."/>
            <person name="Mizuno T."/>
            <person name="Morinaga M."/>
            <person name="Sasaki M."/>
            <person name="Togashi T."/>
            <person name="Oyama M."/>
            <person name="Hata H."/>
            <person name="Watanabe M."/>
            <person name="Komatsu T."/>
            <person name="Mizushima-Sugano J."/>
            <person name="Satoh T."/>
            <person name="Shirai Y."/>
            <person name="Takahashi Y."/>
            <person name="Nakagawa K."/>
            <person name="Okumura K."/>
            <person name="Nagase T."/>
            <person name="Nomura N."/>
            <person name="Kikuchi H."/>
            <person name="Masuho Y."/>
            <person name="Yamashita R."/>
            <person name="Nakai K."/>
            <person name="Yada T."/>
            <person name="Nakamura Y."/>
            <person name="Ohara O."/>
            <person name="Isogai T."/>
            <person name="Sugano S."/>
        </authorList>
    </citation>
    <scope>NUCLEOTIDE SEQUENCE [LARGE SCALE MRNA] (ISOFORM 2)</scope>
    <scope>NUCLEOTIDE SEQUENCE [LARGE SCALE MRNA] OF 303-665 (ISOFORM 1)</scope>
    <source>
        <tissue evidence="17">Kidney epithelium</tissue>
    </source>
</reference>
<reference evidence="14 20" key="3">
    <citation type="submission" date="2005-04" db="EMBL/GenBank/DDBJ databases">
        <authorList>
            <person name="Totoki Y."/>
            <person name="Toyoda A."/>
            <person name="Takeda T."/>
            <person name="Sakaki Y."/>
            <person name="Tanaka A."/>
            <person name="Yokoyama S."/>
            <person name="Ohara O."/>
            <person name="Nagase T."/>
            <person name="Kikuno R.F."/>
        </authorList>
    </citation>
    <scope>NUCLEOTIDE SEQUENCE [LARGE SCALE MRNA] (ISOFORM 1)</scope>
    <source>
        <tissue evidence="19">Brain</tissue>
        <tissue evidence="20">Kidney</tissue>
    </source>
</reference>
<reference evidence="14 16" key="4">
    <citation type="journal article" date="2003" name="Nature">
        <title>The DNA sequence and analysis of human chromosome 6.</title>
        <authorList>
            <person name="Mungall A.J."/>
            <person name="Palmer S.A."/>
            <person name="Sims S.K."/>
            <person name="Edwards C.A."/>
            <person name="Ashurst J.L."/>
            <person name="Wilming L."/>
            <person name="Jones M.C."/>
            <person name="Horton R."/>
            <person name="Hunt S.E."/>
            <person name="Scott C.E."/>
            <person name="Gilbert J.G.R."/>
            <person name="Clamp M.E."/>
            <person name="Bethel G."/>
            <person name="Milne S."/>
            <person name="Ainscough R."/>
            <person name="Almeida J.P."/>
            <person name="Ambrose K.D."/>
            <person name="Andrews T.D."/>
            <person name="Ashwell R.I.S."/>
            <person name="Babbage A.K."/>
            <person name="Bagguley C.L."/>
            <person name="Bailey J."/>
            <person name="Banerjee R."/>
            <person name="Barker D.J."/>
            <person name="Barlow K.F."/>
            <person name="Bates K."/>
            <person name="Beare D.M."/>
            <person name="Beasley H."/>
            <person name="Beasley O."/>
            <person name="Bird C.P."/>
            <person name="Blakey S.E."/>
            <person name="Bray-Allen S."/>
            <person name="Brook J."/>
            <person name="Brown A.J."/>
            <person name="Brown J.Y."/>
            <person name="Burford D.C."/>
            <person name="Burrill W."/>
            <person name="Burton J."/>
            <person name="Carder C."/>
            <person name="Carter N.P."/>
            <person name="Chapman J.C."/>
            <person name="Clark S.Y."/>
            <person name="Clark G."/>
            <person name="Clee C.M."/>
            <person name="Clegg S."/>
            <person name="Cobley V."/>
            <person name="Collier R.E."/>
            <person name="Collins J.E."/>
            <person name="Colman L.K."/>
            <person name="Corby N.R."/>
            <person name="Coville G.J."/>
            <person name="Culley K.M."/>
            <person name="Dhami P."/>
            <person name="Davies J."/>
            <person name="Dunn M."/>
            <person name="Earthrowl M.E."/>
            <person name="Ellington A.E."/>
            <person name="Evans K.A."/>
            <person name="Faulkner L."/>
            <person name="Francis M.D."/>
            <person name="Frankish A."/>
            <person name="Frankland J."/>
            <person name="French L."/>
            <person name="Garner P."/>
            <person name="Garnett J."/>
            <person name="Ghori M.J."/>
            <person name="Gilby L.M."/>
            <person name="Gillson C.J."/>
            <person name="Glithero R.J."/>
            <person name="Grafham D.V."/>
            <person name="Grant M."/>
            <person name="Gribble S."/>
            <person name="Griffiths C."/>
            <person name="Griffiths M.N.D."/>
            <person name="Hall R."/>
            <person name="Halls K.S."/>
            <person name="Hammond S."/>
            <person name="Harley J.L."/>
            <person name="Hart E.A."/>
            <person name="Heath P.D."/>
            <person name="Heathcott R."/>
            <person name="Holmes S.J."/>
            <person name="Howden P.J."/>
            <person name="Howe K.L."/>
            <person name="Howell G.R."/>
            <person name="Huckle E."/>
            <person name="Humphray S.J."/>
            <person name="Humphries M.D."/>
            <person name="Hunt A.R."/>
            <person name="Johnson C.M."/>
            <person name="Joy A.A."/>
            <person name="Kay M."/>
            <person name="Keenan S.J."/>
            <person name="Kimberley A.M."/>
            <person name="King A."/>
            <person name="Laird G.K."/>
            <person name="Langford C."/>
            <person name="Lawlor S."/>
            <person name="Leongamornlert D.A."/>
            <person name="Leversha M."/>
            <person name="Lloyd C.R."/>
            <person name="Lloyd D.M."/>
            <person name="Loveland J.E."/>
            <person name="Lovell J."/>
            <person name="Martin S."/>
            <person name="Mashreghi-Mohammadi M."/>
            <person name="Maslen G.L."/>
            <person name="Matthews L."/>
            <person name="McCann O.T."/>
            <person name="McLaren S.J."/>
            <person name="McLay K."/>
            <person name="McMurray A."/>
            <person name="Moore M.J.F."/>
            <person name="Mullikin J.C."/>
            <person name="Niblett D."/>
            <person name="Nickerson T."/>
            <person name="Novik K.L."/>
            <person name="Oliver K."/>
            <person name="Overton-Larty E.K."/>
            <person name="Parker A."/>
            <person name="Patel R."/>
            <person name="Pearce A.V."/>
            <person name="Peck A.I."/>
            <person name="Phillimore B.J.C.T."/>
            <person name="Phillips S."/>
            <person name="Plumb R.W."/>
            <person name="Porter K.M."/>
            <person name="Ramsey Y."/>
            <person name="Ranby S.A."/>
            <person name="Rice C.M."/>
            <person name="Ross M.T."/>
            <person name="Searle S.M."/>
            <person name="Sehra H.K."/>
            <person name="Sheridan E."/>
            <person name="Skuce C.D."/>
            <person name="Smith S."/>
            <person name="Smith M."/>
            <person name="Spraggon L."/>
            <person name="Squares S.L."/>
            <person name="Steward C.A."/>
            <person name="Sycamore N."/>
            <person name="Tamlyn-Hall G."/>
            <person name="Tester J."/>
            <person name="Theaker A.J."/>
            <person name="Thomas D.W."/>
            <person name="Thorpe A."/>
            <person name="Tracey A."/>
            <person name="Tromans A."/>
            <person name="Tubby B."/>
            <person name="Wall M."/>
            <person name="Wallis J.M."/>
            <person name="West A.P."/>
            <person name="White S.S."/>
            <person name="Whitehead S.L."/>
            <person name="Whittaker H."/>
            <person name="Wild A."/>
            <person name="Willey D.J."/>
            <person name="Wilmer T.E."/>
            <person name="Wood J.M."/>
            <person name="Wray P.W."/>
            <person name="Wyatt J.C."/>
            <person name="Young L."/>
            <person name="Younger R.M."/>
            <person name="Bentley D.R."/>
            <person name="Coulson A."/>
            <person name="Durbin R.M."/>
            <person name="Hubbard T."/>
            <person name="Sulston J.E."/>
            <person name="Dunham I."/>
            <person name="Rogers J."/>
            <person name="Beck S."/>
        </authorList>
    </citation>
    <scope>NUCLEOTIDE SEQUENCE [LARGE SCALE GENOMIC DNA]</scope>
</reference>
<reference evidence="14 20" key="5">
    <citation type="submission" date="2005-07" db="EMBL/GenBank/DDBJ databases">
        <authorList>
            <person name="Mural R.J."/>
            <person name="Istrail S."/>
            <person name="Sutton G.G."/>
            <person name="Florea L."/>
            <person name="Halpern A.L."/>
            <person name="Mobarry C.M."/>
            <person name="Lippert R."/>
            <person name="Walenz B."/>
            <person name="Shatkay H."/>
            <person name="Dew I."/>
            <person name="Miller J.R."/>
            <person name="Flanigan M.J."/>
            <person name="Edwards N.J."/>
            <person name="Bolanos R."/>
            <person name="Fasulo D."/>
            <person name="Halldorsson B.V."/>
            <person name="Hannenhalli S."/>
            <person name="Turner R."/>
            <person name="Yooseph S."/>
            <person name="Lu F."/>
            <person name="Nusskern D.R."/>
            <person name="Shue B.C."/>
            <person name="Zheng X.H."/>
            <person name="Zhong F."/>
            <person name="Delcher A.L."/>
            <person name="Huson D.H."/>
            <person name="Kravitz S.A."/>
            <person name="Mouchard L."/>
            <person name="Reinert K."/>
            <person name="Remington K.A."/>
            <person name="Clark A.G."/>
            <person name="Waterman M.S."/>
            <person name="Eichler E.E."/>
            <person name="Adams M.D."/>
            <person name="Hunkapiller M.W."/>
            <person name="Myers E.W."/>
            <person name="Venter J.C."/>
        </authorList>
    </citation>
    <scope>NUCLEOTIDE SEQUENCE [LARGE SCALE GENOMIC DNA]</scope>
</reference>
<reference evidence="14 15" key="6">
    <citation type="journal article" date="2004" name="Genome Res.">
        <title>The status, quality, and expansion of the NIH full-length cDNA project: the Mammalian Gene Collection (MGC).</title>
        <authorList>
            <consortium name="The MGC Project Team"/>
        </authorList>
    </citation>
    <scope>NUCLEOTIDE SEQUENCE [LARGE SCALE MRNA] (ISOFORM 2)</scope>
    <source>
        <tissue evidence="15">Muscle</tissue>
    </source>
</reference>
<reference evidence="14 20" key="7">
    <citation type="submission" date="1999-12" db="EMBL/GenBank/DDBJ databases">
        <title>Characterization of RuvB homologs in human and mouse.</title>
        <authorList>
            <person name="Adamson A.W."/>
            <person name="Shannon M.E."/>
            <person name="Lamerdin J.E."/>
            <person name="Thelen M.P."/>
        </authorList>
    </citation>
    <scope>NUCLEOTIDE SEQUENCE [MRNA] OF 144-665 (ISOFORM 1)</scope>
</reference>
<reference key="8">
    <citation type="journal article" date="2005" name="Genes Cells">
        <title>Human Werner helicase interacting protein 1 (WRNIP1) functions as a novel modulator for DNA polymerase delta.</title>
        <authorList>
            <person name="Tsurimoto T."/>
            <person name="Shinozaki A."/>
            <person name="Yano M."/>
            <person name="Seki M."/>
            <person name="Enomoto T."/>
        </authorList>
    </citation>
    <scope>FUNCTION</scope>
    <scope>SUBUNIT</scope>
    <scope>INTERACTION WITH POLD1; POLD2 AND POLD4</scope>
    <scope>MUTAGENESIS OF THR-294</scope>
</reference>
<reference key="9">
    <citation type="journal article" date="2005" name="Nat. Biotechnol.">
        <title>Immunoaffinity profiling of tyrosine phosphorylation in cancer cells.</title>
        <authorList>
            <person name="Rush J."/>
            <person name="Moritz A."/>
            <person name="Lee K.A."/>
            <person name="Guo A."/>
            <person name="Goss V.L."/>
            <person name="Spek E.J."/>
            <person name="Zhang H."/>
            <person name="Zha X.-M."/>
            <person name="Polakiewicz R.D."/>
            <person name="Comb M.J."/>
        </authorList>
    </citation>
    <scope>PHOSPHORYLATION [LARGE SCALE ANALYSIS] AT TYR-534 AND TYR-562</scope>
    <scope>IDENTIFICATION BY MASS SPECTROMETRY [LARGE SCALE ANALYSIS]</scope>
</reference>
<reference key="10">
    <citation type="journal article" date="2006" name="Cell">
        <title>Global, in vivo, and site-specific phosphorylation dynamics in signaling networks.</title>
        <authorList>
            <person name="Olsen J.V."/>
            <person name="Blagoev B."/>
            <person name="Gnad F."/>
            <person name="Macek B."/>
            <person name="Kumar C."/>
            <person name="Mortensen P."/>
            <person name="Mann M."/>
        </authorList>
    </citation>
    <scope>IDENTIFICATION BY MASS SPECTROMETRY [LARGE SCALE ANALYSIS]</scope>
    <source>
        <tissue>Cervix carcinoma</tissue>
    </source>
</reference>
<reference key="11">
    <citation type="journal article" date="2007" name="J. Biol. Chem.">
        <title>Werner helicase-interacting protein 1 binds polyubiquitin via its zinc finger domain.</title>
        <authorList>
            <person name="Bish R.A."/>
            <person name="Myers M.P."/>
        </authorList>
    </citation>
    <scope>INTERACTION WITH POLYUBIQUITIN</scope>
    <scope>SUMOYLATION</scope>
    <scope>UBIQUITINATION AT LYS-81; LYS-141; LYS-225; LYS-301; LYS-310; LYS-316; LYS-322; LYS-335; LYS-482; LYS-627; LYS-633 AND LYS-636</scope>
    <scope>DOMAIN UBZ-TYPE ZINC-FINGER</scope>
</reference>
<reference key="12">
    <citation type="journal article" date="2008" name="J. Biol. Chem.">
        <title>Human Wrnip1 is localized in replication factories in a ubiquitin-binding zinc finger-dependent manner.</title>
        <authorList>
            <person name="Crosetto N."/>
            <person name="Bienko M."/>
            <person name="Hibbert R.G."/>
            <person name="Perica T."/>
            <person name="Ambrogio C."/>
            <person name="Kensche T."/>
            <person name="Hofmann K."/>
            <person name="Sixma T.K."/>
            <person name="Dikic I."/>
        </authorList>
    </citation>
    <scope>SUBCELLULAR LOCATION</scope>
    <scope>INTERACTION WITH POLYUBIQUITIN</scope>
    <scope>SUBUNIT</scope>
</reference>
<reference key="13">
    <citation type="journal article" date="2008" name="J. Proteome Res.">
        <title>Combining protein-based IMAC, peptide-based IMAC, and MudPIT for efficient phosphoproteomic analysis.</title>
        <authorList>
            <person name="Cantin G.T."/>
            <person name="Yi W."/>
            <person name="Lu B."/>
            <person name="Park S.K."/>
            <person name="Xu T."/>
            <person name="Lee J.-D."/>
            <person name="Yates J.R. III"/>
        </authorList>
    </citation>
    <scope>IDENTIFICATION BY MASS SPECTROMETRY [LARGE SCALE ANALYSIS]</scope>
    <source>
        <tissue>Cervix carcinoma</tissue>
    </source>
</reference>
<reference key="14">
    <citation type="journal article" date="2008" name="Proc. Natl. Acad. Sci. U.S.A.">
        <title>A quantitative atlas of mitotic phosphorylation.</title>
        <authorList>
            <person name="Dephoure N."/>
            <person name="Zhou C."/>
            <person name="Villen J."/>
            <person name="Beausoleil S.A."/>
            <person name="Bakalarski C.E."/>
            <person name="Elledge S.J."/>
            <person name="Gygi S.P."/>
        </authorList>
    </citation>
    <scope>PHOSPHORYLATION [LARGE SCALE ANALYSIS] AT SER-75; THR-85; SER-91; SER-92 AND THR-116</scope>
    <scope>IDENTIFICATION BY MASS SPECTROMETRY [LARGE SCALE ANALYSIS]</scope>
    <source>
        <tissue>Cervix carcinoma</tissue>
    </source>
</reference>
<reference key="15">
    <citation type="journal article" date="2009" name="Anal. Chem.">
        <title>Lys-N and trypsin cover complementary parts of the phosphoproteome in a refined SCX-based approach.</title>
        <authorList>
            <person name="Gauci S."/>
            <person name="Helbig A.O."/>
            <person name="Slijper M."/>
            <person name="Krijgsveld J."/>
            <person name="Heck A.J."/>
            <person name="Mohammed S."/>
        </authorList>
    </citation>
    <scope>IDENTIFICATION BY MASS SPECTROMETRY [LARGE SCALE ANALYSIS]</scope>
</reference>
<reference key="16">
    <citation type="journal article" date="2009" name="Mol. Cell. Proteomics">
        <title>Large-scale proteomics analysis of the human kinome.</title>
        <authorList>
            <person name="Oppermann F.S."/>
            <person name="Gnad F."/>
            <person name="Olsen J.V."/>
            <person name="Hornberger R."/>
            <person name="Greff Z."/>
            <person name="Keri G."/>
            <person name="Mann M."/>
            <person name="Daub H."/>
        </authorList>
    </citation>
    <scope>IDENTIFICATION BY MASS SPECTROMETRY [LARGE SCALE ANALYSIS]</scope>
</reference>
<reference key="17">
    <citation type="journal article" date="2009" name="Sci. Signal.">
        <title>Quantitative phosphoproteomic analysis of T cell receptor signaling reveals system-wide modulation of protein-protein interactions.</title>
        <authorList>
            <person name="Mayya V."/>
            <person name="Lundgren D.H."/>
            <person name="Hwang S.-I."/>
            <person name="Rezaul K."/>
            <person name="Wu L."/>
            <person name="Eng J.K."/>
            <person name="Rodionov V."/>
            <person name="Han D.K."/>
        </authorList>
    </citation>
    <scope>PHOSPHORYLATION [LARGE SCALE ANALYSIS] AT THR-85; SER-91 AND SER-92</scope>
    <scope>IDENTIFICATION BY MASS SPECTROMETRY [LARGE SCALE ANALYSIS]</scope>
    <source>
        <tissue>Leukemic T-cell</tissue>
    </source>
</reference>
<reference key="18">
    <citation type="journal article" date="2009" name="Science">
        <title>Lysine acetylation targets protein complexes and co-regulates major cellular functions.</title>
        <authorList>
            <person name="Choudhary C."/>
            <person name="Kumar C."/>
            <person name="Gnad F."/>
            <person name="Nielsen M.L."/>
            <person name="Rehman M."/>
            <person name="Walther T.C."/>
            <person name="Olsen J.V."/>
            <person name="Mann M."/>
        </authorList>
    </citation>
    <scope>ACETYLATION [LARGE SCALE ANALYSIS] AT LYS-633</scope>
    <scope>IDENTIFICATION BY MASS SPECTROMETRY [LARGE SCALE ANALYSIS]</scope>
</reference>
<reference key="19">
    <citation type="journal article" date="2010" name="Sci. Signal.">
        <title>Quantitative phosphoproteomics reveals widespread full phosphorylation site occupancy during mitosis.</title>
        <authorList>
            <person name="Olsen J.V."/>
            <person name="Vermeulen M."/>
            <person name="Santamaria A."/>
            <person name="Kumar C."/>
            <person name="Miller M.L."/>
            <person name="Jensen L.J."/>
            <person name="Gnad F."/>
            <person name="Cox J."/>
            <person name="Jensen T.S."/>
            <person name="Nigg E.A."/>
            <person name="Brunak S."/>
            <person name="Mann M."/>
        </authorList>
    </citation>
    <scope>PHOSPHORYLATION [LARGE SCALE ANALYSIS] AT SER-75 AND SER-153</scope>
    <scope>IDENTIFICATION BY MASS SPECTROMETRY [LARGE SCALE ANALYSIS]</scope>
    <source>
        <tissue>Cervix carcinoma</tissue>
    </source>
</reference>
<reference key="20">
    <citation type="journal article" date="2011" name="BMC Syst. Biol.">
        <title>Initial characterization of the human central proteome.</title>
        <authorList>
            <person name="Burkard T.R."/>
            <person name="Planyavsky M."/>
            <person name="Kaupe I."/>
            <person name="Breitwieser F.P."/>
            <person name="Buerckstuemmer T."/>
            <person name="Bennett K.L."/>
            <person name="Superti-Furga G."/>
            <person name="Colinge J."/>
        </authorList>
    </citation>
    <scope>IDENTIFICATION BY MASS SPECTROMETRY [LARGE SCALE ANALYSIS]</scope>
</reference>
<reference key="21">
    <citation type="journal article" date="2011" name="Sci. Signal.">
        <title>System-wide temporal characterization of the proteome and phosphoproteome of human embryonic stem cell differentiation.</title>
        <authorList>
            <person name="Rigbolt K.T."/>
            <person name="Prokhorova T.A."/>
            <person name="Akimov V."/>
            <person name="Henningsen J."/>
            <person name="Johansen P.T."/>
            <person name="Kratchmarova I."/>
            <person name="Kassem M."/>
            <person name="Mann M."/>
            <person name="Olsen J.V."/>
            <person name="Blagoev B."/>
        </authorList>
    </citation>
    <scope>PHOSPHORYLATION [LARGE SCALE ANALYSIS] AT SER-153</scope>
    <scope>IDENTIFICATION BY MASS SPECTROMETRY [LARGE SCALE ANALYSIS]</scope>
</reference>
<reference key="22">
    <citation type="journal article" date="2013" name="J. Proteome Res.">
        <title>Toward a comprehensive characterization of a human cancer cell phosphoproteome.</title>
        <authorList>
            <person name="Zhou H."/>
            <person name="Di Palma S."/>
            <person name="Preisinger C."/>
            <person name="Peng M."/>
            <person name="Polat A.N."/>
            <person name="Heck A.J."/>
            <person name="Mohammed S."/>
        </authorList>
    </citation>
    <scope>PHOSPHORYLATION [LARGE SCALE ANALYSIS] AT SER-65; SER-75; SER-139 AND SER-153</scope>
    <scope>IDENTIFICATION BY MASS SPECTROMETRY [LARGE SCALE ANALYSIS]</scope>
    <source>
        <tissue>Cervix carcinoma</tissue>
        <tissue>Erythroleukemia</tissue>
    </source>
</reference>
<reference key="23">
    <citation type="journal article" date="2014" name="J. Proteomics">
        <title>An enzyme assisted RP-RPLC approach for in-depth analysis of human liver phosphoproteome.</title>
        <authorList>
            <person name="Bian Y."/>
            <person name="Song C."/>
            <person name="Cheng K."/>
            <person name="Dong M."/>
            <person name="Wang F."/>
            <person name="Huang J."/>
            <person name="Sun D."/>
            <person name="Wang L."/>
            <person name="Ye M."/>
            <person name="Zou H."/>
        </authorList>
    </citation>
    <scope>PHOSPHORYLATION [LARGE SCALE ANALYSIS] AT SER-153</scope>
    <scope>IDENTIFICATION BY MASS SPECTROMETRY [LARGE SCALE ANALYSIS]</scope>
    <source>
        <tissue>Liver</tissue>
    </source>
</reference>
<reference key="24">
    <citation type="journal article" date="2017" name="Mol. Cell">
        <title>Assembly of the WHIP-TRIM14-PPP6C mitochondrial complex promotes RIG-I-mediated antiviral signaling.</title>
        <authorList>
            <person name="Tan P."/>
            <person name="He L."/>
            <person name="Cui J."/>
            <person name="Qian C."/>
            <person name="Cao X."/>
            <person name="Lin M."/>
            <person name="Zhu Q."/>
            <person name="Li Y."/>
            <person name="Xing C."/>
            <person name="Yu X."/>
            <person name="Wang H.Y."/>
            <person name="Wang R.F."/>
        </authorList>
    </citation>
    <scope>FUNCTION</scope>
    <scope>INTERACTION WITH TRIM14 AND PPP6C</scope>
    <scope>SUBCELLULAR LOCATION</scope>
</reference>
<reference key="25">
    <citation type="journal article" date="2017" name="Nat. Struct. Mol. Biol.">
        <title>Site-specific mapping of the human SUMO proteome reveals co-modification with phosphorylation.</title>
        <authorList>
            <person name="Hendriks I.A."/>
            <person name="Lyon D."/>
            <person name="Young C."/>
            <person name="Jensen L.J."/>
            <person name="Vertegaal A.C."/>
            <person name="Nielsen M.L."/>
        </authorList>
    </citation>
    <scope>SUMOYLATION [LARGE SCALE ANALYSIS] AT LYS-482</scope>
    <scope>IDENTIFICATION BY MASS SPECTROMETRY [LARGE SCALE ANALYSIS]</scope>
</reference>
<reference key="26">
    <citation type="journal article" date="2016" name="FEBS J.">
        <title>A novel mode of ubiquitin recognition by the ubiquitin-binding zinc finger domain of WRNIP1.</title>
        <authorList>
            <person name="Suzuki N."/>
            <person name="Rohaim A."/>
            <person name="Kato R."/>
            <person name="Dikic I."/>
            <person name="Wakatsuki S."/>
            <person name="Kawasaki M."/>
        </authorList>
    </citation>
    <scope>X-RAY CRYSTALLOGRAPHY (1.90 ANGSTROMS) OF 17-40 IN COMPLEX WITH ZINC</scope>
    <scope>MUTAGENESIS OF VAL-18; PRO-21; VAL-22; ILE-32; ASN-33; LEU-36; ASP-37; LEU-40; LEU-41; LEU-42 AND PRO-44</scope>
</reference>
<keyword id="KW-0002">3D-structure</keyword>
<keyword id="KW-0007">Acetylation</keyword>
<keyword id="KW-0025">Alternative splicing</keyword>
<keyword id="KW-0067">ATP-binding</keyword>
<keyword id="KW-0963">Cytoplasm</keyword>
<keyword id="KW-0227">DNA damage</keyword>
<keyword id="KW-0234">DNA repair</keyword>
<keyword id="KW-0235">DNA replication</keyword>
<keyword id="KW-0378">Hydrolase</keyword>
<keyword id="KW-0391">Immunity</keyword>
<keyword id="KW-0399">Innate immunity</keyword>
<keyword id="KW-1017">Isopeptide bond</keyword>
<keyword id="KW-0479">Metal-binding</keyword>
<keyword id="KW-0547">Nucleotide-binding</keyword>
<keyword id="KW-0539">Nucleus</keyword>
<keyword id="KW-0597">Phosphoprotein</keyword>
<keyword id="KW-1267">Proteomics identification</keyword>
<keyword id="KW-1185">Reference proteome</keyword>
<keyword id="KW-0832">Ubl conjugation</keyword>
<keyword id="KW-0862">Zinc</keyword>
<keyword id="KW-0863">Zinc-finger</keyword>